<proteinExistence type="inferred from homology"/>
<accession>Q5PE23</accession>
<reference key="1">
    <citation type="journal article" date="2004" name="Nat. Genet.">
        <title>Comparison of genome degradation in Paratyphi A and Typhi, human-restricted serovars of Salmonella enterica that cause typhoid.</title>
        <authorList>
            <person name="McClelland M."/>
            <person name="Sanderson K.E."/>
            <person name="Clifton S.W."/>
            <person name="Latreille P."/>
            <person name="Porwollik S."/>
            <person name="Sabo A."/>
            <person name="Meyer R."/>
            <person name="Bieri T."/>
            <person name="Ozersky P."/>
            <person name="McLellan M."/>
            <person name="Harkins C.R."/>
            <person name="Wang C."/>
            <person name="Nguyen C."/>
            <person name="Berghoff A."/>
            <person name="Elliott G."/>
            <person name="Kohlberg S."/>
            <person name="Strong C."/>
            <person name="Du F."/>
            <person name="Carter J."/>
            <person name="Kremizki C."/>
            <person name="Layman D."/>
            <person name="Leonard S."/>
            <person name="Sun H."/>
            <person name="Fulton L."/>
            <person name="Nash W."/>
            <person name="Miner T."/>
            <person name="Minx P."/>
            <person name="Delehaunty K."/>
            <person name="Fronick C."/>
            <person name="Magrini V."/>
            <person name="Nhan M."/>
            <person name="Warren W."/>
            <person name="Florea L."/>
            <person name="Spieth J."/>
            <person name="Wilson R.K."/>
        </authorList>
    </citation>
    <scope>NUCLEOTIDE SEQUENCE [LARGE SCALE GENOMIC DNA]</scope>
    <source>
        <strain>ATCC 9150 / SARB42</strain>
    </source>
</reference>
<evidence type="ECO:0000255" key="1">
    <source>
        <dbReference type="HAMAP-Rule" id="MF_00816"/>
    </source>
</evidence>
<comment type="similarity">
    <text evidence="1">Belongs to the UPF0352 family.</text>
</comment>
<dbReference type="EMBL" id="CP000026">
    <property type="protein sequence ID" value="AAV76623.1"/>
    <property type="molecule type" value="Genomic_DNA"/>
</dbReference>
<dbReference type="RefSeq" id="WP_001135904.1">
    <property type="nucleotide sequence ID" value="NC_006511.1"/>
</dbReference>
<dbReference type="SMR" id="Q5PE23"/>
<dbReference type="KEGG" id="spt:SPA0623"/>
<dbReference type="HOGENOM" id="CLU_175457_0_0_6"/>
<dbReference type="Proteomes" id="UP000008185">
    <property type="component" value="Chromosome"/>
</dbReference>
<dbReference type="Gene3D" id="1.10.3390.10">
    <property type="entry name" value="YejL-like"/>
    <property type="match status" value="1"/>
</dbReference>
<dbReference type="HAMAP" id="MF_00816">
    <property type="entry name" value="UPF0352"/>
    <property type="match status" value="1"/>
</dbReference>
<dbReference type="InterPro" id="IPR009857">
    <property type="entry name" value="UPF0352"/>
</dbReference>
<dbReference type="InterPro" id="IPR023202">
    <property type="entry name" value="YejL_sf"/>
</dbReference>
<dbReference type="NCBIfam" id="NF010242">
    <property type="entry name" value="PRK13689.1"/>
    <property type="match status" value="1"/>
</dbReference>
<dbReference type="Pfam" id="PF07208">
    <property type="entry name" value="DUF1414"/>
    <property type="match status" value="1"/>
</dbReference>
<dbReference type="PIRSF" id="PIRSF006188">
    <property type="entry name" value="UCP006188"/>
    <property type="match status" value="1"/>
</dbReference>
<dbReference type="SUPFAM" id="SSF158651">
    <property type="entry name" value="YejL-like"/>
    <property type="match status" value="1"/>
</dbReference>
<name>YEJL_SALPA</name>
<sequence length="75" mass="8231">MPQLSRYSDEHVEQLLSELLSVLEKHKAPTDLSLMVLGNMVTNLINTSVAPAQRQAIANSFARALQSSISEDNAH</sequence>
<gene>
    <name evidence="1" type="primary">yejL</name>
    <name type="ordered locus">SPA0623</name>
</gene>
<feature type="chain" id="PRO_0000201796" description="UPF0352 protein YejL">
    <location>
        <begin position="1"/>
        <end position="75"/>
    </location>
</feature>
<protein>
    <recommendedName>
        <fullName evidence="1">UPF0352 protein YejL</fullName>
    </recommendedName>
</protein>
<organism>
    <name type="scientific">Salmonella paratyphi A (strain ATCC 9150 / SARB42)</name>
    <dbReference type="NCBI Taxonomy" id="295319"/>
    <lineage>
        <taxon>Bacteria</taxon>
        <taxon>Pseudomonadati</taxon>
        <taxon>Pseudomonadota</taxon>
        <taxon>Gammaproteobacteria</taxon>
        <taxon>Enterobacterales</taxon>
        <taxon>Enterobacteriaceae</taxon>
        <taxon>Salmonella</taxon>
    </lineage>
</organism>